<proteinExistence type="evidence at protein level"/>
<feature type="peptide" id="PRO_0000450766" description="Cyclotide hyen-J" evidence="2">
    <location>
        <begin position="1"/>
        <end position="31"/>
    </location>
</feature>
<feature type="disulfide bond" evidence="2 3">
    <location>
        <begin position="5"/>
        <end position="21"/>
    </location>
</feature>
<feature type="disulfide bond" evidence="2 3">
    <location>
        <begin position="9"/>
        <end position="23"/>
    </location>
</feature>
<feature type="disulfide bond" evidence="2 3">
    <location>
        <begin position="14"/>
        <end position="28"/>
    </location>
</feature>
<feature type="cross-link" description="Cyclopeptide (Gly-Asp)" evidence="1">
    <location>
        <begin position="1"/>
        <end position="31"/>
    </location>
</feature>
<accession>C0HLP4</accession>
<evidence type="ECO:0000250" key="1">
    <source>
        <dbReference type="UniProtKB" id="C0HK39"/>
    </source>
</evidence>
<evidence type="ECO:0000255" key="2">
    <source>
        <dbReference type="PROSITE-ProRule" id="PRU00395"/>
    </source>
</evidence>
<evidence type="ECO:0000269" key="3">
    <source>
    </source>
</evidence>
<evidence type="ECO:0000303" key="4">
    <source>
    </source>
</evidence>
<evidence type="ECO:0000305" key="5"/>
<reference evidence="5" key="1">
    <citation type="journal article" date="2020" name="J. Biol. Chem.">
        <title>Discovery and mechanistic studies of cytotoxic cyclotides from the medicinal herb Hybanthus enneaspermus.</title>
        <authorList>
            <person name="Du Q."/>
            <person name="Chan L.Y."/>
            <person name="Gilding E.K."/>
            <person name="Henriques S.T."/>
            <person name="Condon N.D."/>
            <person name="Ravipati A.S."/>
            <person name="Kaas Q."/>
            <person name="Huang Y.H."/>
            <person name="Craik D.J."/>
        </authorList>
    </citation>
    <scope>PROTEIN SEQUENCE</scope>
    <scope>MASS SPECTROMETRY</scope>
    <scope>TISSUE SPECIFICITY</scope>
    <scope>DISULFIDE BONDS</scope>
</reference>
<name>CYHEJ_PIGEN</name>
<organism evidence="4">
    <name type="scientific">Pigea enneasperma</name>
    <name type="common">Spade flower</name>
    <name type="synonym">Afrohybanthus enneaspermus</name>
    <dbReference type="NCBI Taxonomy" id="212266"/>
    <lineage>
        <taxon>Eukaryota</taxon>
        <taxon>Viridiplantae</taxon>
        <taxon>Streptophyta</taxon>
        <taxon>Embryophyta</taxon>
        <taxon>Tracheophyta</taxon>
        <taxon>Spermatophyta</taxon>
        <taxon>Magnoliopsida</taxon>
        <taxon>eudicotyledons</taxon>
        <taxon>Gunneridae</taxon>
        <taxon>Pentapetalae</taxon>
        <taxon>rosids</taxon>
        <taxon>fabids</taxon>
        <taxon>Malpighiales</taxon>
        <taxon>Violaceae</taxon>
        <taxon>Pigea</taxon>
    </lineage>
</organism>
<sequence length="31" mass="3214">GSVPCGESCVWIPCITSIAGCSCSNKVCYMD</sequence>
<keyword id="KW-0903">Direct protein sequencing</keyword>
<keyword id="KW-1015">Disulfide bond</keyword>
<keyword id="KW-0960">Knottin</keyword>
<keyword id="KW-0611">Plant defense</keyword>
<comment type="function">
    <text evidence="2">Probably participates in a plant defense mechanism.</text>
</comment>
<comment type="tissue specificity">
    <text evidence="3">Detected in seeds (at protein level).</text>
</comment>
<comment type="domain">
    <text evidence="5">The presence of a 'disulfide through disulfide knot' structurally defines this protein as a knottin.</text>
</comment>
<comment type="PTM">
    <text evidence="2">This is a cyclic peptide.</text>
</comment>
<comment type="mass spectrometry" mass="3187.4" method="MALDI" evidence="3"/>
<comment type="similarity">
    <text evidence="2">Belongs to the cyclotide family. Bracelet subfamily.</text>
</comment>
<comment type="caution">
    <text evidence="2">This peptide is cyclic. The start position was chosen by similarity to Oak1 (kalata B1) for which the DNA sequence is known.</text>
</comment>
<protein>
    <recommendedName>
        <fullName evidence="4">Cyclotide hyen-J</fullName>
    </recommendedName>
</protein>
<dbReference type="SMR" id="C0HLP4"/>
<dbReference type="GO" id="GO:0051715">
    <property type="term" value="P:cytolysis in another organism"/>
    <property type="evidence" value="ECO:0000314"/>
    <property type="project" value="UniProtKB"/>
</dbReference>
<dbReference type="GO" id="GO:0006952">
    <property type="term" value="P:defense response"/>
    <property type="evidence" value="ECO:0000314"/>
    <property type="project" value="UniProtKB"/>
</dbReference>
<dbReference type="InterPro" id="IPR005535">
    <property type="entry name" value="Cyclotide"/>
</dbReference>
<dbReference type="InterPro" id="IPR012323">
    <property type="entry name" value="Cyclotide_bracelet_CS"/>
</dbReference>
<dbReference type="InterPro" id="IPR036146">
    <property type="entry name" value="Cyclotide_sf"/>
</dbReference>
<dbReference type="Pfam" id="PF03784">
    <property type="entry name" value="Cyclotide"/>
    <property type="match status" value="1"/>
</dbReference>
<dbReference type="PIRSF" id="PIRSF037891">
    <property type="entry name" value="Cycloviolacin"/>
    <property type="match status" value="1"/>
</dbReference>
<dbReference type="SUPFAM" id="SSF57038">
    <property type="entry name" value="Cyclotides"/>
    <property type="match status" value="1"/>
</dbReference>
<dbReference type="PROSITE" id="PS51052">
    <property type="entry name" value="CYCLOTIDE"/>
    <property type="match status" value="1"/>
</dbReference>
<dbReference type="PROSITE" id="PS60008">
    <property type="entry name" value="CYCLOTIDE_BRACELET"/>
    <property type="match status" value="1"/>
</dbReference>